<protein>
    <recommendedName>
        <fullName>Histone H3.3</fullName>
    </recommendedName>
</protein>
<reference key="1">
    <citation type="submission" date="2006-03" db="EMBL/GenBank/DDBJ databases">
        <authorList>
            <consortium name="Sanger Xenopus tropicalis EST/cDNA project"/>
        </authorList>
    </citation>
    <scope>NUCLEOTIDE SEQUENCE [LARGE SCALE MRNA]</scope>
    <source>
        <tissue>Gastrula</tissue>
    </source>
</reference>
<reference key="2">
    <citation type="submission" date="2003-11" db="EMBL/GenBank/DDBJ databases">
        <authorList>
            <consortium name="NIH - Xenopus Gene Collection (XGC) project"/>
        </authorList>
    </citation>
    <scope>NUCLEOTIDE SEQUENCE [LARGE SCALE MRNA]</scope>
    <source>
        <tissue>Embryo</tissue>
    </source>
</reference>
<gene>
    <name type="ORF">TGas113e22.1</name>
</gene>
<proteinExistence type="evidence at protein level"/>
<feature type="initiator methionine" description="Removed" evidence="7">
    <location>
        <position position="1"/>
    </location>
</feature>
<feature type="chain" id="PRO_0000253958" description="Histone H3.3">
    <location>
        <begin position="2"/>
        <end position="136"/>
    </location>
</feature>
<feature type="region of interest" description="Disordered" evidence="6">
    <location>
        <begin position="1"/>
        <end position="43"/>
    </location>
</feature>
<feature type="site" description="Interaction with zmynd11" evidence="3">
    <location>
        <position position="32"/>
    </location>
</feature>
<feature type="modified residue" description="Asymmetric dimethylarginine; by PRMT6" evidence="3">
    <location>
        <position position="3"/>
    </location>
</feature>
<feature type="modified residue" description="Phosphothreonine; by HASPIN and VRK1" evidence="3">
    <location>
        <position position="4"/>
    </location>
</feature>
<feature type="modified residue" description="Allysine; alternate" evidence="3">
    <location>
        <position position="5"/>
    </location>
</feature>
<feature type="modified residue" description="N6,N6,N6-trimethyllysine; alternate" evidence="3">
    <location>
        <position position="5"/>
    </location>
</feature>
<feature type="modified residue" description="N6,N6-dimethyllysine; alternate" evidence="3">
    <location>
        <position position="5"/>
    </location>
</feature>
<feature type="modified residue" description="N6-(2-hydroxyisobutyryl)lysine; alternate" evidence="1">
    <location>
        <position position="5"/>
    </location>
</feature>
<feature type="modified residue" description="N6-acetyllysine; alternate" evidence="3">
    <location>
        <position position="5"/>
    </location>
</feature>
<feature type="modified residue" description="N6-methyllysine; alternate" evidence="3">
    <location>
        <position position="5"/>
    </location>
</feature>
<feature type="modified residue" description="5-glutamyl dopamine; alternate" evidence="3">
    <location>
        <position position="6"/>
    </location>
</feature>
<feature type="modified residue" description="5-glutamyl serotonin; alternate" evidence="3">
    <location>
        <position position="6"/>
    </location>
</feature>
<feature type="modified residue" description="Phosphothreonine; by PKC" evidence="3">
    <location>
        <position position="7"/>
    </location>
</feature>
<feature type="modified residue" description="N6-(2-hydroxyisobutyryl)lysine; alternate" evidence="1">
    <location>
        <position position="10"/>
    </location>
</feature>
<feature type="modified residue" description="N6-lactoyllysine; alternate" evidence="3">
    <location>
        <position position="10"/>
    </location>
</feature>
<feature type="modified residue" description="N6-methylated lysine" evidence="3">
    <location>
        <position position="10"/>
    </location>
</feature>
<feature type="modified residue" description="ADP-ribosylserine; alternate" evidence="1">
    <location>
        <position position="11"/>
    </location>
</feature>
<feature type="modified residue" description="Phosphoserine; alternate; by AURKB, AURKC, RPS6KA3, RPS6KA4 and RPS6KA5" evidence="3">
    <location>
        <position position="11"/>
    </location>
</feature>
<feature type="modified residue" description="Phosphothreonine; by PKC" evidence="3">
    <location>
        <position position="12"/>
    </location>
</feature>
<feature type="modified residue" description="N6-(2-hydroxyisobutyryl)lysine; alternate" evidence="1">
    <location>
        <position position="15"/>
    </location>
</feature>
<feature type="modified residue" description="N6-acetyllysine" evidence="3">
    <location>
        <position position="15"/>
    </location>
</feature>
<feature type="modified residue" description="N6-glutaryllysine; alternate" evidence="3">
    <location>
        <position position="15"/>
    </location>
</feature>
<feature type="modified residue" description="N6-lactoyllysine; alternate" evidence="4">
    <location>
        <position position="15"/>
    </location>
</feature>
<feature type="modified residue" description="Asymmetric dimethylarginine" evidence="3">
    <location>
        <position position="18"/>
    </location>
</feature>
<feature type="modified residue" description="N6-(2-hydroxyisobutyryl)lysine; alternate" evidence="1">
    <location>
        <position position="19"/>
    </location>
</feature>
<feature type="modified residue" description="N6-acetyllysine; alternate" evidence="3">
    <location>
        <position position="19"/>
    </location>
</feature>
<feature type="modified residue" description="N6-butyryllysine; alternate" evidence="2">
    <location>
        <position position="19"/>
    </location>
</feature>
<feature type="modified residue" description="N6-glutaryllysine; alternate" evidence="3">
    <location>
        <position position="19"/>
    </location>
</feature>
<feature type="modified residue" description="N6-lactoyllysine; alternate" evidence="3">
    <location>
        <position position="19"/>
    </location>
</feature>
<feature type="modified residue" description="N6-methylated lysine; alternate" evidence="3">
    <location>
        <position position="19"/>
    </location>
</feature>
<feature type="modified residue" description="N6-(2-hydroxyisobutyryl)lysine; alternate" evidence="1">
    <location>
        <position position="24"/>
    </location>
</feature>
<feature type="modified residue" description="N6-acetyllysine" evidence="3">
    <location>
        <position position="24"/>
    </location>
</feature>
<feature type="modified residue" description="N6-butyryllysine; alternate" evidence="2">
    <location>
        <position position="24"/>
    </location>
</feature>
<feature type="modified residue" description="N6-glutaryllysine; alternate" evidence="3">
    <location>
        <position position="24"/>
    </location>
</feature>
<feature type="modified residue" description="N6-lactoyllysine; alternate" evidence="3">
    <location>
        <position position="24"/>
    </location>
</feature>
<feature type="modified residue" description="N6-(2-hydroxyisobutyryl)lysine; alternate" evidence="1">
    <location>
        <position position="28"/>
    </location>
</feature>
<feature type="modified residue" description="N6-acetyllysine; alternate" evidence="3">
    <location>
        <position position="28"/>
    </location>
</feature>
<feature type="modified residue" description="N6-glutaryllysine; alternate" evidence="3">
    <location>
        <position position="28"/>
    </location>
</feature>
<feature type="modified residue" description="N6-lactoyllysine; alternate" evidence="3">
    <location>
        <position position="28"/>
    </location>
</feature>
<feature type="modified residue" description="N6-methylated lysine; alternate" evidence="3">
    <location>
        <position position="28"/>
    </location>
</feature>
<feature type="modified residue" description="ADP-ribosylserine; alternate" evidence="1">
    <location>
        <position position="29"/>
    </location>
</feature>
<feature type="modified residue" description="Phosphoserine; alternate; by AURKB, AURKC and RPS6KA5" evidence="3">
    <location>
        <position position="29"/>
    </location>
</feature>
<feature type="modified residue" description="N6-(2-hydroxyisobutyryl)lysine; alternate" evidence="1">
    <location>
        <position position="37"/>
    </location>
</feature>
<feature type="modified residue" description="N6-acetyllysine; alternate" evidence="3">
    <location>
        <position position="37"/>
    </location>
</feature>
<feature type="modified residue" description="N6-methylated lysine; alternate" evidence="3">
    <location>
        <position position="37"/>
    </location>
</feature>
<feature type="modified residue" description="Phosphotyrosine" evidence="3">
    <location>
        <position position="42"/>
    </location>
</feature>
<feature type="modified residue" description="N6-(2-hydroxyisobutyryl)lysine; alternate" evidence="1">
    <location>
        <position position="57"/>
    </location>
</feature>
<feature type="modified residue" description="N6-glutaryllysine; alternate" evidence="3">
    <location>
        <position position="57"/>
    </location>
</feature>
<feature type="modified residue" description="N6-lactoyllysine; alternate" evidence="4">
    <location>
        <position position="57"/>
    </location>
</feature>
<feature type="modified residue" description="N6-succinyllysine; alternate" evidence="4">
    <location>
        <position position="57"/>
    </location>
</feature>
<feature type="modified residue" description="Phosphoserine" evidence="3">
    <location>
        <position position="58"/>
    </location>
</feature>
<feature type="modified residue" description="N6-(2-hydroxyisobutyryl)lysine; alternate" evidence="1">
    <location>
        <position position="65"/>
    </location>
</feature>
<feature type="modified residue" description="N6-methylated lysine" evidence="3">
    <location>
        <position position="65"/>
    </location>
</feature>
<feature type="modified residue" description="N6-(2-hydroxyisobutyryl)lysine; alternate" evidence="1">
    <location>
        <position position="80"/>
    </location>
</feature>
<feature type="modified residue" description="N6-glutaryllysine; alternate" evidence="3">
    <location>
        <position position="80"/>
    </location>
</feature>
<feature type="modified residue" description="N6-lactoyllysine; alternate" evidence="3">
    <location>
        <position position="80"/>
    </location>
</feature>
<feature type="modified residue" description="N6-methylated lysine" evidence="3">
    <location>
        <position position="80"/>
    </location>
</feature>
<feature type="modified residue" description="N6-succinyllysine; alternate" evidence="4">
    <location>
        <position position="80"/>
    </location>
</feature>
<feature type="modified residue" description="Phosphothreonine" evidence="3">
    <location>
        <position position="81"/>
    </location>
</feature>
<feature type="modified residue" description="N6-acetyllysine; alternate" evidence="3">
    <location>
        <position position="116"/>
    </location>
</feature>
<feature type="modified residue" description="N6-glutaryllysine; alternate" evidence="3">
    <location>
        <position position="116"/>
    </location>
</feature>
<feature type="modified residue" description="N6-(2-hydroxyisobutyryl)lysine; alternate" evidence="1">
    <location>
        <position position="123"/>
    </location>
</feature>
<feature type="modified residue" description="N6-acetyllysine; alternate" evidence="3">
    <location>
        <position position="123"/>
    </location>
</feature>
<feature type="modified residue" description="N6-glutaryllysine; alternate" evidence="3">
    <location>
        <position position="123"/>
    </location>
</feature>
<feature type="modified residue" description="N6-methyllysine; alternate" evidence="3">
    <location>
        <position position="123"/>
    </location>
</feature>
<feature type="modified residue" description="N6-succinyllysine; alternate" evidence="3">
    <location>
        <position position="123"/>
    </location>
</feature>
<comment type="function">
    <text evidence="3">Variant histone H3 which replaces conventional H3 in a wide range of nucleosomes in active genes. Constitutes the predominant form of histone H3 in non-dividing cells and is incorporated into chromatin independently of DNA synthesis. Deposited at sites of nucleosomal displacement throughout transcribed genes, suggesting that it represents an epigenetic imprint of transcriptionally active chromatin. Nucleosomes wrap and compact DNA into chromatin, limiting DNA accessibility to the cellular machineries which require DNA as a template. Histones thereby play a central role in transcription regulation, DNA repair, DNA replication and chromosomal stability. DNA accessibility is regulated via a complex set of post-translational modifications of histones, also called histone code, and nucleosome remodeling.</text>
</comment>
<comment type="subunit">
    <text evidence="3">The nucleosome is a histone octamer containing two molecules each of H2A, H2B, H3 and H4 assembled in one H3-H4 heterotetramer and two H2A-H2B heterodimers. The octamer wraps approximately 147 bp of DNA. Interacts with zmynd11; when trimethylated at 'Lys-36' (H3.3K36me3).</text>
</comment>
<comment type="subcellular location">
    <subcellularLocation>
        <location>Nucleus</location>
    </subcellularLocation>
    <subcellularLocation>
        <location>Chromosome</location>
    </subcellularLocation>
</comment>
<comment type="developmental stage">
    <text>Expressed during S phase, then expression strongly decreases as cell division slows down during the process of differentiation.</text>
</comment>
<comment type="domain">
    <text evidence="3">Specific interaction of trimethylated form at 'Lys-36' (H3.3K36me3) with zmynd11 is mediated by the encapsulation of Ser-32 residue with a composite pocket formed by the tandem bromo-PWWP domains.</text>
</comment>
<comment type="PTM">
    <text evidence="3">Acetylation is generally linked to gene activation. Acetylation on Lys-19 (H3K18ac) and Lys-24 (H3K24ac) favors methylation at Arg-18 (H3R17me). Acetylation at Lys-123 (H3K122ac) by EP300/p300 plays a central role in chromatin structure: localizes at the surface of the histone octamer and stimulates transcription, possibly by promoting nucleosome instability (By similarity).</text>
</comment>
<comment type="PTM">
    <text evidence="3">Asymmetric dimethylation at Arg-18 (H3R17me2a) is linked to gene activation. Asymmetric dimethylation at Arg-3 (H3R2me2a) by prmt6 is linked to gene repression and is mutually exclusive with H3 Lys-5 methylation (H3K4me2 and H3K4me3). H3R2me2a is present at the 3' of genes regardless of their transcription state and is enriched on inactive promoters, while it is absent on active promoters (By similarity).</text>
</comment>
<comment type="PTM">
    <text evidence="3">Specifically enriched in modifications associated with active chromatin such as methylation at Lys-5 (H3K4me), Lys-37 (H3K36me) and Lys-80 (H3K79me) are linked to gene activation. Methylation at Lys-5 (H3K4me) facilitates subsequent acetylation of H3 and H4. Methylation at Lys-80 (H3K79me) is associated with DNA double-strand break (DSB) responses and is a specific target for tp53bp1. Methylation at Lys-10 (H3K9me) and Lys-28 (H3K27me) are linked to gene repression. Methylation at Lys-10 (H3K9me) is a specific target for HP1 proteins (cbx1, cbx3 and cbx5) and prevents subsequent phosphorylation at Ser-11 (H3S10ph) and acetylation of H3 and H4. Methylation at Lys-5 (H3K4me) and Lys-80 (H3K79me) require preliminary monoubiquitination of H2B at 'Lys-120' (By similarity).</text>
</comment>
<comment type="PTM">
    <text evidence="3">Phosphorylated at Thr-4 (H3T3ph) by VRK1 (By similarity). Phosphorylated at Thr-4 (H3T3ph) by HASPIN during prophase and dephosphorylated during anaphase. Phosphorylation at Ser-11 (H3S10ph) by aurkb is crucial for chromosome condensation and cell-cycle progression during mitosis and meiosis. In addition phosphorylation at Ser-11 (H3S10ph) by rps6ka4 and rps6ka5 is important during interphase because it enables the transcription of genes following external stimulation, like mitogens, stress, growth factors or UV irradiation and result in the activation of genes, such as c-fos and c-jun. Phosphorylation at Ser-11 (H3S10ph), which is linked to gene activation, prevents methylation at Lys-10 (H3K9me) but facilitates acetylation of H3 and H4. Phosphorylation at Ser-11 (H3S10ph) by aurkb mediates the dissociation of HP1 proteins (cbx1, cbx3 and cbx5) from heterochromatin. Phosphorylation at Ser-11 (H3S10ph) is also an essential regulatory mechanism for neoplastic cell transformation. Phosphorylated at Ser-29 (H3S28ph) by map3k20 isoform 1, rps6ka5 or aurkb during mitosis or upon ultraviolet B irradiation. Phosphorylation at Thr-7 (H3T6ph) by prkcb is a specific tag for epigenetic transcriptional activation that prevents demethylation of Lys-5 (H3K4me) by lsd1/kdm1a. At centromeres, specifically phosphorylated at Thr-12 (H3T11ph) from prophase to early anaphase, by DAPK3 and PKN1. Phosphorylation at Thr-12 (H3T11ph) by PKN1 or isoform M2 of PKM (PKM2) is a specific tag for epigenetic transcriptional activation that promotes demethylation of Lys-10 (H3K9me) by kdm4c/jmjd2c. Phosphorylation at Tyr-42 (H3Y41ph) by jak2 promotes exclusion of cbx5 (HP1 alpha) from chromatin. Phosphorylation on Ser-32 (H3S31ph) is specific to regions bordering centromeres in metaphase chromosomes.</text>
</comment>
<comment type="PTM">
    <text evidence="3">Monoubiquitinated by rag1 in lymphoid cells, monoubiquitination is required for V(D)J recombination.</text>
</comment>
<comment type="PTM">
    <text evidence="3">Lysine deamination at Lys-5 (H3K4all) to form allysine only takes place on H3K4me3 and results in gene repression.</text>
</comment>
<comment type="PTM">
    <text evidence="2">Butyrylation of histones marks active promoters and competes with histone acetylation. It is present during late spermatogenesis.</text>
</comment>
<comment type="PTM">
    <text evidence="3">Succinylation at Lys-80 (H3K79succ) by KAT2A takes place with a maximum frequency around the transcription start sites of genes. It gives a specific tag for epigenetic transcription activation. Desuccinylation at Lys-123 (H3K122succ) by SIRT7 in response to DNA damage promotes chromatin condensation and double-strand breaks (DSBs) repair.</text>
</comment>
<comment type="PTM">
    <text evidence="1">Serine ADP-ribosylation constitutes the primary form of ADP-ribosylation of proteins in response to DNA damage. Serine ADP-ribosylation at Ser-11 (H3S10ADPr) is mutually exclusive with phosphorylation at Ser-11 (H3S10ph) and impairs acetylation at Lys-10 (H3K9ac).</text>
</comment>
<comment type="PTM">
    <text evidence="3">Serotonylated by TGM2 at Gln-6 (H3Q5ser) during serotonergic neuron differentiation (By similarity). H3Q5ser is associated with trimethylation of Lys-5 (H3K4me3) and enhances general transcription factor IID (TFIID) complex-binding to H3K4me3, thereby facilitating transcription (By similarity).</text>
</comment>
<comment type="PTM">
    <text evidence="3 5">Dopaminylated by TGM2 at Gln-6 (H3Q5dop) in ventral tegmental area (VTA) neurons (By similarity). H3Q5dop mediates neurotransmission-independent role of nuclear dopamine by regulating relapse-related transcriptional plasticity in the reward system (By similarity).</text>
</comment>
<comment type="PTM">
    <text evidence="3">Lactylated in macrophages by EP300/P300 by using lactoyl-CoA directly derived from endogenous or exogenous lactate, leading to stimulates gene transcription.</text>
</comment>
<comment type="similarity">
    <text evidence="7">Belongs to the histone H3 family.</text>
</comment>
<evidence type="ECO:0000250" key="1">
    <source>
        <dbReference type="UniProtKB" id="P68431"/>
    </source>
</evidence>
<evidence type="ECO:0000250" key="2">
    <source>
        <dbReference type="UniProtKB" id="P68433"/>
    </source>
</evidence>
<evidence type="ECO:0000250" key="3">
    <source>
        <dbReference type="UniProtKB" id="P84243"/>
    </source>
</evidence>
<evidence type="ECO:0000250" key="4">
    <source>
        <dbReference type="UniProtKB" id="P84244"/>
    </source>
</evidence>
<evidence type="ECO:0000250" key="5">
    <source>
        <dbReference type="UniProtKB" id="P84245"/>
    </source>
</evidence>
<evidence type="ECO:0000256" key="6">
    <source>
        <dbReference type="SAM" id="MobiDB-lite"/>
    </source>
</evidence>
<evidence type="ECO:0000305" key="7"/>
<sequence length="136" mass="15328">MARTKQTARKSTGGKAPRKQLATKAARKSAPSTGGVKKPHRYRPGTVALREIRRYQKSTELLIRKLPFQRLVREIAQDFKTDLRFQSAAIGALQEASEAYLVGLFEDTNLCAIHAKRVTIMPKDIQLARRIRGERA</sequence>
<name>H33_XENTR</name>
<organism>
    <name type="scientific">Xenopus tropicalis</name>
    <name type="common">Western clawed frog</name>
    <name type="synonym">Silurana tropicalis</name>
    <dbReference type="NCBI Taxonomy" id="8364"/>
    <lineage>
        <taxon>Eukaryota</taxon>
        <taxon>Metazoa</taxon>
        <taxon>Chordata</taxon>
        <taxon>Craniata</taxon>
        <taxon>Vertebrata</taxon>
        <taxon>Euteleostomi</taxon>
        <taxon>Amphibia</taxon>
        <taxon>Batrachia</taxon>
        <taxon>Anura</taxon>
        <taxon>Pipoidea</taxon>
        <taxon>Pipidae</taxon>
        <taxon>Xenopodinae</taxon>
        <taxon>Xenopus</taxon>
        <taxon>Silurana</taxon>
    </lineage>
</organism>
<dbReference type="EMBL" id="CR761443">
    <property type="protein sequence ID" value="CAL49400.1"/>
    <property type="molecule type" value="mRNA"/>
</dbReference>
<dbReference type="EMBL" id="BC061408">
    <property type="protein sequence ID" value="AAH61408.1"/>
    <property type="molecule type" value="mRNA"/>
</dbReference>
<dbReference type="EMBL" id="BC077035">
    <property type="protein sequence ID" value="AAH77035.1"/>
    <property type="molecule type" value="mRNA"/>
</dbReference>
<dbReference type="PDB" id="2H9M">
    <property type="method" value="X-ray"/>
    <property type="resolution" value="1.90 A"/>
    <property type="chains" value="B/D=2-12"/>
</dbReference>
<dbReference type="PDB" id="2H9N">
    <property type="method" value="X-ray"/>
    <property type="resolution" value="2.00 A"/>
    <property type="chains" value="B/D=2-12"/>
</dbReference>
<dbReference type="PDB" id="2H9P">
    <property type="method" value="X-ray"/>
    <property type="resolution" value="1.91 A"/>
    <property type="chains" value="B=2-12"/>
</dbReference>
<dbReference type="PDBsum" id="2H9M"/>
<dbReference type="PDBsum" id="2H9N"/>
<dbReference type="PDBsum" id="2H9P"/>
<dbReference type="SMR" id="Q6P823"/>
<dbReference type="FunCoup" id="Q6P823">
    <property type="interactions" value="2794"/>
</dbReference>
<dbReference type="STRING" id="8364.ENSXETP00000012333"/>
<dbReference type="PaxDb" id="8364-ENSXETP00000027509"/>
<dbReference type="DNASU" id="100038101"/>
<dbReference type="DNASU" id="394622"/>
<dbReference type="DNASU" id="448680"/>
<dbReference type="KEGG" id="xtr:100038101"/>
<dbReference type="KEGG" id="xtr:394622"/>
<dbReference type="KEGG" id="xtr:448680"/>
<dbReference type="AGR" id="Xenbase:XB-GENE-488758"/>
<dbReference type="CTD" id="15081"/>
<dbReference type="CTD" id="3020"/>
<dbReference type="CTD" id="3021"/>
<dbReference type="Xenbase" id="XB-GENE-488758">
    <property type="gene designation" value="h3-3b"/>
</dbReference>
<dbReference type="eggNOG" id="KOG1745">
    <property type="taxonomic scope" value="Eukaryota"/>
</dbReference>
<dbReference type="HOGENOM" id="CLU_078295_4_0_1"/>
<dbReference type="InParanoid" id="Q6P823"/>
<dbReference type="OMA" id="HIFAEMA"/>
<dbReference type="OrthoDB" id="9891818at2759"/>
<dbReference type="PhylomeDB" id="Q6P823"/>
<dbReference type="TreeFam" id="TF314241"/>
<dbReference type="EvolutionaryTrace" id="Q6P823"/>
<dbReference type="Proteomes" id="UP000008143">
    <property type="component" value="Chromosome 10"/>
</dbReference>
<dbReference type="Proteomes" id="UP000008143">
    <property type="component" value="Chromosome 5"/>
</dbReference>
<dbReference type="Proteomes" id="UP000008143">
    <property type="component" value="Chromosome 9"/>
</dbReference>
<dbReference type="Bgee" id="ENSXETG00000012575">
    <property type="expression patterns" value="Expressed in gastrula and 33 other cell types or tissues"/>
</dbReference>
<dbReference type="ExpressionAtlas" id="Q6P823">
    <property type="expression patterns" value="baseline"/>
</dbReference>
<dbReference type="GO" id="GO:0000786">
    <property type="term" value="C:nucleosome"/>
    <property type="evidence" value="ECO:0007669"/>
    <property type="project" value="UniProtKB-KW"/>
</dbReference>
<dbReference type="GO" id="GO:0005634">
    <property type="term" value="C:nucleus"/>
    <property type="evidence" value="ECO:0007669"/>
    <property type="project" value="UniProtKB-SubCell"/>
</dbReference>
<dbReference type="GO" id="GO:0003677">
    <property type="term" value="F:DNA binding"/>
    <property type="evidence" value="ECO:0007669"/>
    <property type="project" value="UniProtKB-KW"/>
</dbReference>
<dbReference type="GO" id="GO:0046982">
    <property type="term" value="F:protein heterodimerization activity"/>
    <property type="evidence" value="ECO:0007669"/>
    <property type="project" value="InterPro"/>
</dbReference>
<dbReference type="GO" id="GO:0030527">
    <property type="term" value="F:structural constituent of chromatin"/>
    <property type="evidence" value="ECO:0007669"/>
    <property type="project" value="InterPro"/>
</dbReference>
<dbReference type="CDD" id="cd22911">
    <property type="entry name" value="HFD_H3"/>
    <property type="match status" value="1"/>
</dbReference>
<dbReference type="FunFam" id="1.10.20.10:FF:000078">
    <property type="entry name" value="Histone H3"/>
    <property type="match status" value="1"/>
</dbReference>
<dbReference type="FunFam" id="1.10.20.10:FF:000044">
    <property type="entry name" value="Histone H3.3"/>
    <property type="match status" value="1"/>
</dbReference>
<dbReference type="Gene3D" id="1.10.20.10">
    <property type="entry name" value="Histone, subunit A"/>
    <property type="match status" value="1"/>
</dbReference>
<dbReference type="InterPro" id="IPR009072">
    <property type="entry name" value="Histone-fold"/>
</dbReference>
<dbReference type="InterPro" id="IPR007125">
    <property type="entry name" value="Histone_H2A/H2B/H3"/>
</dbReference>
<dbReference type="InterPro" id="IPR000164">
    <property type="entry name" value="Histone_H3/CENP-A"/>
</dbReference>
<dbReference type="PANTHER" id="PTHR11426">
    <property type="entry name" value="HISTONE H3"/>
    <property type="match status" value="1"/>
</dbReference>
<dbReference type="Pfam" id="PF00125">
    <property type="entry name" value="Histone"/>
    <property type="match status" value="1"/>
</dbReference>
<dbReference type="PRINTS" id="PR00622">
    <property type="entry name" value="HISTONEH3"/>
</dbReference>
<dbReference type="SMART" id="SM00428">
    <property type="entry name" value="H3"/>
    <property type="match status" value="1"/>
</dbReference>
<dbReference type="SUPFAM" id="SSF47113">
    <property type="entry name" value="Histone-fold"/>
    <property type="match status" value="1"/>
</dbReference>
<dbReference type="PROSITE" id="PS00322">
    <property type="entry name" value="HISTONE_H3_1"/>
    <property type="match status" value="1"/>
</dbReference>
<dbReference type="PROSITE" id="PS00959">
    <property type="entry name" value="HISTONE_H3_2"/>
    <property type="match status" value="1"/>
</dbReference>
<accession>Q6P823</accession>
<accession>Q07G64</accession>
<keyword id="KW-0002">3D-structure</keyword>
<keyword id="KW-0007">Acetylation</keyword>
<keyword id="KW-0013">ADP-ribosylation</keyword>
<keyword id="KW-0158">Chromosome</keyword>
<keyword id="KW-0238">DNA-binding</keyword>
<keyword id="KW-0379">Hydroxylation</keyword>
<keyword id="KW-0488">Methylation</keyword>
<keyword id="KW-0544">Nucleosome core</keyword>
<keyword id="KW-0539">Nucleus</keyword>
<keyword id="KW-0597">Phosphoprotein</keyword>
<keyword id="KW-1185">Reference proteome</keyword>
<keyword id="KW-0832">Ubl conjugation</keyword>